<feature type="chain" id="PRO_0000089327" description="Outer kinetochore KNL1 complex subunit KNL1">
    <location>
        <begin position="1"/>
        <end position="2342"/>
    </location>
</feature>
<feature type="repeat" description="1">
    <location>
        <begin position="885"/>
        <end position="989"/>
    </location>
</feature>
<feature type="repeat" description="2">
    <location>
        <begin position="1099"/>
        <end position="1201"/>
    </location>
</feature>
<feature type="region of interest" description="Interaction with BUB1 and BUB1B" evidence="9">
    <location>
        <begin position="1"/>
        <end position="728"/>
    </location>
</feature>
<feature type="region of interest" description="May mediate oligomerization" evidence="20">
    <location>
        <begin position="1"/>
        <end position="250"/>
    </location>
</feature>
<feature type="region of interest" description="Disordered" evidence="3">
    <location>
        <begin position="1"/>
        <end position="56"/>
    </location>
</feature>
<feature type="region of interest" description="Interaction with microtubules" evidence="28">
    <location>
        <begin position="17"/>
        <end position="34"/>
    </location>
</feature>
<feature type="region of interest" description="Interaction with PP1CA; contains the protein phosphatase 1 (PP1) interaction motifs SILK, RVXF and phi-phi" evidence="28">
    <location>
        <begin position="23"/>
        <end position="80"/>
    </location>
</feature>
<feature type="region of interest" description="Interaction with microtubules" evidence="28">
    <location>
        <begin position="53"/>
        <end position="80"/>
    </location>
</feature>
<feature type="region of interest" description="Interaction with BUB1" evidence="9 14 17">
    <location>
        <begin position="174"/>
        <end position="190"/>
    </location>
</feature>
<feature type="region of interest" description="Interaction with BUB1B" evidence="9 14 15 17">
    <location>
        <begin position="210"/>
        <end position="226"/>
    </location>
</feature>
<feature type="region of interest" description="Disordered" evidence="3">
    <location>
        <begin position="620"/>
        <end position="646"/>
    </location>
</feature>
<feature type="region of interest" description="2 X 104 AA approximate repeats">
    <location>
        <begin position="855"/>
        <end position="1201"/>
    </location>
</feature>
<feature type="region of interest" description="Disordered" evidence="3">
    <location>
        <begin position="1639"/>
        <end position="1662"/>
    </location>
</feature>
<feature type="region of interest" description="Required for interaction with ZWINT" evidence="14 20">
    <location>
        <begin position="1981"/>
        <end position="2108"/>
    </location>
</feature>
<feature type="region of interest" description="Interaction with NSL1, DSN1 and required for assembly into the outer kinetochore" evidence="9 13 20 42">
    <location>
        <begin position="2091"/>
        <end position="2311"/>
    </location>
</feature>
<feature type="coiled-coil region" evidence="2">
    <location>
        <begin position="2024"/>
        <end position="2133"/>
    </location>
</feature>
<feature type="short sequence motif" description="Nuclear localization signal" evidence="2">
    <location>
        <begin position="1789"/>
        <end position="1803"/>
    </location>
</feature>
<feature type="compositionally biased region" description="Low complexity" evidence="3">
    <location>
        <begin position="622"/>
        <end position="633"/>
    </location>
</feature>
<feature type="compositionally biased region" description="Basic and acidic residues" evidence="3">
    <location>
        <begin position="1642"/>
        <end position="1651"/>
    </location>
</feature>
<feature type="site" description="Breakpoint for translocation to form KMT2A-KNL1" evidence="6">
    <location>
        <begin position="1818"/>
        <end position="1819"/>
    </location>
</feature>
<feature type="modified residue" description="Phosphoserine; by AURKB" evidence="28 40">
    <location>
        <position position="24"/>
    </location>
</feature>
<feature type="modified residue" description="Phosphoserine" evidence="51 55">
    <location>
        <position position="32"/>
    </location>
</feature>
<feature type="modified residue" description="Phosphoserine; by AURKB" evidence="28 51 55">
    <location>
        <position position="60"/>
    </location>
</feature>
<feature type="modified residue" description="Phosphothreonine" evidence="54 55">
    <location>
        <position position="539"/>
    </location>
</feature>
<feature type="modified residue" description="Phosphoserine" evidence="55">
    <location>
        <position position="578"/>
    </location>
</feature>
<feature type="modified residue" description="Phosphoserine" evidence="55">
    <location>
        <position position="584"/>
    </location>
</feature>
<feature type="modified residue" description="Phosphothreonine" evidence="55">
    <location>
        <position position="586"/>
    </location>
</feature>
<feature type="modified residue" description="Phosphoserine" evidence="55">
    <location>
        <position position="767"/>
    </location>
</feature>
<feature type="modified residue" description="Phosphothreonine" evidence="18">
    <location>
        <position position="901"/>
    </location>
</feature>
<feature type="modified residue" description="Phosphoserine" evidence="54 55">
    <location>
        <position position="956"/>
    </location>
</feature>
<feature type="modified residue" description="Phosphoserine" evidence="55">
    <location>
        <position position="1039"/>
    </location>
</feature>
<feature type="modified residue" description="Phosphoserine" evidence="51 52 53 54 55">
    <location>
        <position position="1076"/>
    </location>
</feature>
<feature type="modified residue" description="Phosphoserine" evidence="55">
    <location>
        <position position="1088"/>
    </location>
</feature>
<feature type="modified residue" description="Phosphoserine" evidence="55">
    <location>
        <position position="1448"/>
    </location>
</feature>
<feature type="modified residue" description="Phosphoserine" evidence="55">
    <location>
        <position position="1675"/>
    </location>
</feature>
<feature type="modified residue" description="Phosphoserine" evidence="51">
    <location>
        <position position="1773"/>
    </location>
</feature>
<feature type="modified residue" description="Phosphoserine" evidence="54">
    <location>
        <position position="1831"/>
    </location>
</feature>
<feature type="modified residue" description="Phosphoserine; by TTK" evidence="27 54">
    <location>
        <position position="1831"/>
    </location>
</feature>
<feature type="modified residue" description="Phosphoserine; by TTK" evidence="27">
    <location>
        <position position="1834"/>
    </location>
</feature>
<feature type="modified residue" description="Phosphoserine" evidence="51 55">
    <location>
        <position position="1845"/>
    </location>
</feature>
<feature type="modified residue" description="Phosphoserine" evidence="55">
    <location>
        <position position="1860"/>
    </location>
</feature>
<feature type="splice variant" id="VSP_013795" description="In isoform 2, isoform 3 and isoform 4." evidence="32 33">
    <location>
        <begin position="84"/>
        <end position="109"/>
    </location>
</feature>
<feature type="splice variant" id="VSP_013796" description="In isoform 3." evidence="33">
    <original>LIETYQKEI</original>
    <variation>VGTRRRRYS</variation>
    <location>
        <begin position="1764"/>
        <end position="1772"/>
    </location>
</feature>
<feature type="splice variant" id="VSP_013797" description="In isoform 3." evidence="33">
    <location>
        <begin position="1773"/>
        <end position="2342"/>
    </location>
</feature>
<feature type="splice variant" id="VSP_018524" description="In isoform 4." evidence="32">
    <original>IFDHHTEEDIDKSANSVLIKNLSRTPSSCSSSLDSIKADGT</original>
    <variation>VSSVLNQRMFLNFGFCFVFLNCGYSQILILVSGRQKIIIST</variation>
    <location>
        <begin position="1819"/>
        <end position="1859"/>
    </location>
</feature>
<feature type="splice variant" id="VSP_018525" description="In isoform 4." evidence="32">
    <location>
        <begin position="1860"/>
        <end position="2342"/>
    </location>
</feature>
<feature type="sequence variant" id="VAR_026428" description="In dbSNP:rs7177192." evidence="5">
    <original>R</original>
    <variation>T</variation>
    <location>
        <position position="43"/>
    </location>
</feature>
<feature type="sequence variant" id="VAR_026429" description="In dbSNP:rs16970874.">
    <original>T</original>
    <variation>A</variation>
    <location>
        <position position="70"/>
    </location>
</feature>
<feature type="sequence variant" id="VAR_026430" description="In dbSNP:rs12911738." evidence="5">
    <original>T</original>
    <variation>A</variation>
    <location>
        <position position="113"/>
    </location>
</feature>
<feature type="sequence variant" id="VAR_061568" description="In dbSNP:rs35146555.">
    <original>M</original>
    <variation>V</variation>
    <location>
        <position position="177"/>
    </location>
</feature>
<feature type="sequence variant" id="VAR_026431" description="In dbSNP:rs2412541." evidence="4 5">
    <original>A</original>
    <variation>S</variation>
    <location>
        <position position="486"/>
    </location>
</feature>
<feature type="sequence variant" id="VAR_054342" description="In dbSNP:rs11858113." evidence="4 5 7 11">
    <original>M</original>
    <variation>T</variation>
    <location>
        <position position="598"/>
    </location>
</feature>
<feature type="sequence variant" id="VAR_026432" description="In dbSNP:rs8040502." evidence="4 5 7">
    <original>R</original>
    <variation>G</variation>
    <location>
        <position position="936"/>
    </location>
</feature>
<feature type="sequence variant" id="VAR_061569" description="In dbSNP:rs58614880.">
    <original>L</original>
    <variation>V</variation>
    <location>
        <position position="1190"/>
    </location>
</feature>
<feature type="sequence variant" id="VAR_026433" description="In dbSNP:rs17747633." evidence="4">
    <original>K</original>
    <variation>E</variation>
    <location>
        <position position="1285"/>
    </location>
</feature>
<feature type="sequence variant" id="VAR_026434" description="In dbSNP:rs16970911." evidence="4">
    <original>T</original>
    <variation>A</variation>
    <location>
        <position position="1473"/>
    </location>
</feature>
<feature type="sequence variant" id="VAR_069085" description="In MCPH4; may inactivate an exonic splicing enhancer and result in abnormal splicing; dbSNP:rs763915472." evidence="19 24">
    <original>M</original>
    <variation>I</variation>
    <location>
        <position position="2041"/>
    </location>
</feature>
<feature type="sequence variant" id="VAR_089761" description="In MCPH4; dbSNP:rs142872154." evidence="25">
    <original>D</original>
    <variation>G</variation>
    <location>
        <position position="2187"/>
    </location>
</feature>
<feature type="sequence variant" id="VAR_061570" description="In dbSNP:rs61164860.">
    <original>C</original>
    <variation>Y</variation>
    <location>
        <position position="2338"/>
    </location>
</feature>
<feature type="mutagenesis site" description="Decreases interaction with PPP1CA and abolishes binding to microtubules." evidence="28">
    <original>SS</original>
    <variation>DD</variation>
    <location>
        <begin position="24"/>
        <end position="25"/>
    </location>
</feature>
<feature type="mutagenesis site" description="Decreases interaction with PPP1CA." evidence="28">
    <original>SILK</original>
    <variation>AAAA</variation>
    <location>
        <begin position="25"/>
        <end position="28"/>
    </location>
</feature>
<feature type="mutagenesis site" description="Decreases interaction with PPP1CA." evidence="28">
    <original>S</original>
    <variation>D</variation>
    <location>
        <position position="60"/>
    </location>
</feature>
<feature type="sequence conflict" description="In Ref. 3; AAM45143." evidence="35" ref="3">
    <original>L</original>
    <variation>H</variation>
    <location>
        <position position="37"/>
    </location>
</feature>
<feature type="sequence conflict" description="In Ref. 2; BAC05691." evidence="35" ref="2">
    <original>P</original>
    <variation>A</variation>
    <location>
        <position position="1332"/>
    </location>
</feature>
<feature type="sequence conflict" description="In Ref. 2; BAC05691." evidence="35" ref="2">
    <original>N</original>
    <variation>H</variation>
    <location>
        <position position="1357"/>
    </location>
</feature>
<feature type="sequence conflict" description="In Ref. 2; BAC05691." evidence="35" ref="2">
    <original>N</original>
    <variation>Y</variation>
    <location>
        <position position="1756"/>
    </location>
</feature>
<feature type="strand" evidence="60">
    <location>
        <begin position="63"/>
        <end position="69"/>
    </location>
</feature>
<feature type="helix" evidence="57">
    <location>
        <begin position="205"/>
        <end position="211"/>
    </location>
</feature>
<feature type="helix" evidence="56">
    <location>
        <begin position="241"/>
        <end position="250"/>
    </location>
</feature>
<feature type="helix" evidence="58">
    <location>
        <begin position="2123"/>
        <end position="2130"/>
    </location>
</feature>
<feature type="strand" evidence="59">
    <location>
        <begin position="2136"/>
        <end position="2140"/>
    </location>
</feature>
<feature type="strand" evidence="59">
    <location>
        <begin position="2146"/>
        <end position="2151"/>
    </location>
</feature>
<feature type="strand" evidence="59">
    <location>
        <begin position="2154"/>
        <end position="2162"/>
    </location>
</feature>
<feature type="turn" evidence="59">
    <location>
        <begin position="2168"/>
        <end position="2170"/>
    </location>
</feature>
<feature type="helix" evidence="58">
    <location>
        <begin position="2172"/>
        <end position="2174"/>
    </location>
</feature>
<feature type="strand" evidence="59">
    <location>
        <begin position="2177"/>
        <end position="2184"/>
    </location>
</feature>
<feature type="turn" evidence="58">
    <location>
        <begin position="2188"/>
        <end position="2190"/>
    </location>
</feature>
<feature type="helix" evidence="59">
    <location>
        <begin position="2193"/>
        <end position="2210"/>
    </location>
</feature>
<feature type="turn" evidence="58">
    <location>
        <begin position="2213"/>
        <end position="2215"/>
    </location>
</feature>
<feature type="helix" evidence="58">
    <location>
        <begin position="2219"/>
        <end position="2221"/>
    </location>
</feature>
<feature type="helix" evidence="59">
    <location>
        <begin position="2222"/>
        <end position="2249"/>
    </location>
</feature>
<feature type="helix" evidence="59">
    <location>
        <begin position="2250"/>
        <end position="2253"/>
    </location>
</feature>
<feature type="strand" evidence="59">
    <location>
        <begin position="2255"/>
        <end position="2261"/>
    </location>
</feature>
<feature type="strand" evidence="59">
    <location>
        <begin position="2264"/>
        <end position="2271"/>
    </location>
</feature>
<feature type="turn" evidence="59">
    <location>
        <begin position="2272"/>
        <end position="2275"/>
    </location>
</feature>
<feature type="strand" evidence="59">
    <location>
        <begin position="2276"/>
        <end position="2283"/>
    </location>
</feature>
<feature type="turn" evidence="59">
    <location>
        <begin position="2286"/>
        <end position="2289"/>
    </location>
</feature>
<feature type="strand" evidence="59">
    <location>
        <begin position="2295"/>
        <end position="2302"/>
    </location>
</feature>
<feature type="helix" evidence="59">
    <location>
        <begin position="2306"/>
        <end position="2315"/>
    </location>
</feature>
<feature type="helix" evidence="59">
    <location>
        <begin position="2322"/>
        <end position="2334"/>
    </location>
</feature>
<feature type="turn" evidence="61">
    <location>
        <begin position="2335"/>
        <end position="2338"/>
    </location>
</feature>
<feature type="helix" evidence="61">
    <location>
        <begin position="2339"/>
        <end position="2341"/>
    </location>
</feature>
<sequence>MDGVSSEANEENDNIERPVRRRHSSILKPPRSPLQDLRGGNERVQESNALRNKKNSRRVSFADTIKVFQTESHMKIVRKSEMEGCSAMVPSQLQLLPPGFKRFSCLSLPETETGENLLLIQNKKLEDNYCEITGMNTLLSAPIHTQMQQKEFSIIEHTRERKHANDQTVIFSDENQMDLTSSHTVMITKGLLDNPISEKSTKIDTTSFLANLKLHTEDSRMKKEVNFSVDQNTSSENKIDFNDFIKRLKTGKCSAFPDVPDKENFEIPIYSKEPNSASSTHQMHVSLKEDENNSNITRLFREKDDGMNFTQCHTANIQTLIPTSSETNSRESKGNDITIYGNDFMDLTFNHTLQILPATGNFSEIENQTQNAMDVTTGYGTKASGNKTVFKSKQNTAFQDLSINSADKIHITRSHIMGAETHIVSQTCNQDARILAMTPESIYSNPSIQGCKTVFYSSCNDAMEMTKCLSNMREEKNLLKHDSNYAKMYCNPDAMSSLTEKTIYSGEENMDITKSHTVAIDNQIFKQDQSNVQIAAAPTPEKEMMLQNLMTTSEDGKMNVNCNSVPHVSKERIQQSLSNPLSISLTDRKTELLSGENMDLTESHTSNLGSQVPLAAYNLAPESTSESHSQSKSSSDECEEITKSRNEPFQRSDIIAKNSLTDTWNKDKDWVLKILPYLDKDSPQSADCNQEIATSHNIVYCGGVLDKQITNRNTVSWEQSLFSTTKPLFSSGQFSMKNHDTAISSHTVKSVLGQNSKLAEPLRKSLSNPTPDYCHDKMIICSEEEQNMDLTKSHTVVIGFGPSELQELGKTNLEHTTGQLTTMNRQIAVKVEKCGKSPIEKSGVLKSNCIMDVLEDESVQKPKFPKEKQNVKIWGRKSVGGPKIDKTIVFSEDDKNDMDITKSYTIEINHRPLLEKRDCHLVPLAGTSETILYTCRQDDMEITRSHTTALECKTVSPDEITTRPMDKTVVFVDNHVELEMTESHTVFIDYQEKERTDRPNFELSQRKSLGTPTVICTPTEESVFFPGNGESDRLVANDSQLTPLEEWSNNRGPVEVADNMELSKSATCKNIKDVQSPGFLNEPLSSKSQRRKSLKLKNDKTIVFSENHKNDMDITQSCMVEIDNESALEDKEDFHLAGASKTILYSCGQDDMEITRSHTTALECKTLLPNEIAIRPMDKTVLFTDNYSDLEVTDSHTVFIDCQATEKILEENPKFGIGKGKNLGVSFPKDNSCVQEIAEKQALAVGNKIVLHTEQKQQLFAATNRTTNEIIKFHSAAMDEKVIGKVVDQACTLEKAQVESCQLNNRDRRNVDFTSSHATAVCGSSDNYSCLPNVISCTDNLEGSAMLLCDKDEEKANYCPVQNDLAYANDFASEYYLESEGQPLSAPCPLLEKEEVIQTSTKGQLDCVITLHKDQDLIKDPRNLLANQTLVYSQDLGEMTKLNSKRVSFKLPKDQMKVYVDDIYVIPQPHFSTDQPPLPKKGQSSINKEEVILSKAGNKSLNIIENSSAPICENKPKILNSEEWFAAACKKELKENIQTTNYNTALDFHSNSDVTKQVIQTHVNAGEAPDPVITSNVPCFHSIKPNLNNLNGKTGEFLAFQTVHLPPLPEQLLELGNKAHNDMHIVQATEIHNINIISSNAKDSRDEENKKSHNGAETTSLPPKTVFKDKVRRCSLGIFLPRLPNKRNCSVTGIDDLEQIPADTTDINHLETQPVSSKDSGIGSVAGKLNLSPSQYINEENLPVYPDEINSSDSINIETEEKALIETYQKEISPYENKMGKTCNSQKRTWVQEEEDIHKEKKIRKNEIKFSDTTQDREIFDHHTEEDIDKSANSVLIKNLSRTPSSCSSSLDSIKADGTSLDFSTYRSSQMESQFLRDTICEESLREKLQDGRITIREFFILLQVHILIQKPRQSNLPGNFTVNTPPTPEDLMLSQYVYRPKIQIYREDCEARRQKIEELKLSASNQDKLLVDINKNLWEKMRHCSDKELKAFGIYLNKIKSCFTKMTKVFTHQGKVALYGKLVQSAQNEREKLQIKIDEMDKILKKIDNCLTEMETETKNLEDEEKNNPVEEWDSEMRAAEKELEQLKTEEEELQRNLLELEVQKEQTLAQIDFMQKQRNRTEELLDQLSLSEWDVVEWSDDQAVFTFVYDTIQLTITFEESVVGFPFLDKRYRKIVDVNFQSLLDEDQAPPSSLLVHKLIFQYVEEKESWKKTCTTQHQLPKMLEEFSLVVHHCRLLGEEIEYLKRWGPNYNLMNIDINNNELRLLFSSSAAFAKFEITLFLSAYYPSVPLPSTIQNHVGNTSQDDIATILSKVPLENNYLKNVVKQIYQDLFQDCHFYH</sequence>
<gene>
    <name evidence="43" type="primary">KNL1</name>
    <name evidence="34" type="synonym">CASC5</name>
    <name type="synonym">KIAA1570</name>
</gene>
<reference key="1">
    <citation type="journal article" date="2000" name="Oncogene">
        <title>AF15q14, a novel partner gene fused to the MLL gene in an acute myeloid leukaemia with a t(11;15)(q23;q14).</title>
        <authorList>
            <person name="Hayette S."/>
            <person name="Tigaud I."/>
            <person name="Vanier A."/>
            <person name="Martel S."/>
            <person name="Corbo L."/>
            <person name="Charrin C."/>
            <person name="Beillard E."/>
            <person name="Deleage G."/>
            <person name="Magaud J.-P."/>
            <person name="Rimokh R."/>
        </authorList>
    </citation>
    <scope>NUCLEOTIDE SEQUENCE [MRNA] (ISOFORMS 2 AND 4)</scope>
    <scope>CHROMOSOMAL TRANSLOCATION WITH KMT2A/MLL1</scope>
    <scope>SUBCELLULAR LOCATION</scope>
    <scope>TISSUE SPECIFICITY</scope>
    <scope>VARIANTS SER-486; THR-598; GLY-936; GLU-1285 AND ALA-1473</scope>
</reference>
<reference key="2">
    <citation type="journal article" date="2002" name="Br. J. Cancer">
        <title>Frequent expression of new cancer/testis gene D40/AF15q14 in lung cancer of smokers.</title>
        <authorList>
            <person name="Takimoto M."/>
            <person name="Wei G."/>
            <person name="Dosaka-Akita H."/>
            <person name="Mao P."/>
            <person name="Kondo S."/>
            <person name="Sakuragi N."/>
            <person name="Chiba I."/>
            <person name="Miura T."/>
            <person name="Itoh N."/>
            <person name="Sasao T."/>
            <person name="Koya R.C."/>
            <person name="Tsukamoto T."/>
            <person name="Fujimoto S."/>
            <person name="Kato H."/>
            <person name="Kuzumaki N."/>
        </authorList>
    </citation>
    <scope>NUCLEOTIDE SEQUENCE [MRNA] (ISOFORM 3)</scope>
    <scope>TISSUE SPECIFICITY</scope>
    <scope>VARIANTS THR-43; ALA-113; SER-486; THR-598 AND GLY-936</scope>
    <source>
        <tissue>Testis</tissue>
    </source>
</reference>
<reference key="3">
    <citation type="journal article" date="2003" name="Oncogene">
        <title>Characterization of the MLL partner gene AF15q14 involved in t(11;15)(q23;q14).</title>
        <authorList>
            <person name="Kuefer M.U."/>
            <person name="Chinwalla V."/>
            <person name="Zeleznik-Le N.J."/>
            <person name="Behm F.G."/>
            <person name="Naeve C.W."/>
            <person name="Rakestraw K.M."/>
            <person name="Mukatira S.T."/>
            <person name="Raimondi S.C."/>
            <person name="Morris S.W."/>
        </authorList>
    </citation>
    <scope>NUCLEOTIDE SEQUENCE [MRNA] (ISOFORM 1)</scope>
    <scope>CHROMOSOMAL TRANSLOCATION WITH KMT2A/MLL1</scope>
    <scope>TISSUE SPECIFICITY</scope>
    <scope>VARIANTS THR-598 AND GLY-936</scope>
</reference>
<reference key="4">
    <citation type="journal article" date="2006" name="Nature">
        <title>Analysis of the DNA sequence and duplication history of human chromosome 15.</title>
        <authorList>
            <person name="Zody M.C."/>
            <person name="Garber M."/>
            <person name="Sharpe T."/>
            <person name="Young S.K."/>
            <person name="Rowen L."/>
            <person name="O'Neill K."/>
            <person name="Whittaker C.A."/>
            <person name="Kamal M."/>
            <person name="Chang J.L."/>
            <person name="Cuomo C.A."/>
            <person name="Dewar K."/>
            <person name="FitzGerald M.G."/>
            <person name="Kodira C.D."/>
            <person name="Madan A."/>
            <person name="Qin S."/>
            <person name="Yang X."/>
            <person name="Abbasi N."/>
            <person name="Abouelleil A."/>
            <person name="Arachchi H.M."/>
            <person name="Baradarani L."/>
            <person name="Birditt B."/>
            <person name="Bloom S."/>
            <person name="Bloom T."/>
            <person name="Borowsky M.L."/>
            <person name="Burke J."/>
            <person name="Butler J."/>
            <person name="Cook A."/>
            <person name="DeArellano K."/>
            <person name="DeCaprio D."/>
            <person name="Dorris L. III"/>
            <person name="Dors M."/>
            <person name="Eichler E.E."/>
            <person name="Engels R."/>
            <person name="Fahey J."/>
            <person name="Fleetwood P."/>
            <person name="Friedman C."/>
            <person name="Gearin G."/>
            <person name="Hall J.L."/>
            <person name="Hensley G."/>
            <person name="Johnson E."/>
            <person name="Jones C."/>
            <person name="Kamat A."/>
            <person name="Kaur A."/>
            <person name="Locke D.P."/>
            <person name="Madan A."/>
            <person name="Munson G."/>
            <person name="Jaffe D.B."/>
            <person name="Lui A."/>
            <person name="Macdonald P."/>
            <person name="Mauceli E."/>
            <person name="Naylor J.W."/>
            <person name="Nesbitt R."/>
            <person name="Nicol R."/>
            <person name="O'Leary S.B."/>
            <person name="Ratcliffe A."/>
            <person name="Rounsley S."/>
            <person name="She X."/>
            <person name="Sneddon K.M.B."/>
            <person name="Stewart S."/>
            <person name="Sougnez C."/>
            <person name="Stone S.M."/>
            <person name="Topham K."/>
            <person name="Vincent D."/>
            <person name="Wang S."/>
            <person name="Zimmer A.R."/>
            <person name="Birren B.W."/>
            <person name="Hood L."/>
            <person name="Lander E.S."/>
            <person name="Nusbaum C."/>
        </authorList>
    </citation>
    <scope>NUCLEOTIDE SEQUENCE [LARGE SCALE GENOMIC DNA]</scope>
</reference>
<reference key="5">
    <citation type="journal article" date="2000" name="DNA Res.">
        <title>Prediction of the coding sequences of unidentified human genes. XVIII. The complete sequences of 100 new cDNA clones from brain which code for large proteins in vitro.</title>
        <authorList>
            <person name="Nagase T."/>
            <person name="Kikuno R."/>
            <person name="Nakayama M."/>
            <person name="Hirosawa M."/>
            <person name="Ohara O."/>
        </authorList>
    </citation>
    <scope>NUCLEOTIDE SEQUENCE [LARGE SCALE MRNA] OF 983-2342</scope>
    <source>
        <tissue>Brain</tissue>
    </source>
</reference>
<reference key="6">
    <citation type="journal article" date="2003" name="Oncogene">
        <title>A t(11;15) fuses MLL to two different genes, AF15q14 and a novel gene MPFYVE on chromosome 15.</title>
        <authorList>
            <person name="Chinwalla V."/>
            <person name="Chien A."/>
            <person name="Odero M."/>
            <person name="Neilly M.B."/>
            <person name="Zeleznik-Le N.J."/>
            <person name="Rowley J.D."/>
        </authorList>
    </citation>
    <scope>CHROMOSOMAL TRANSLOCATION WITH KMT2A</scope>
</reference>
<reference key="7">
    <citation type="journal article" date="2004" name="Nat. Cell Biol.">
        <title>A conserved Mis12 centromere complex is linked to heterochromatic HP1 and outer kinetochore protein Zwint-1.</title>
        <authorList>
            <person name="Obuse C."/>
            <person name="Iwasaki O."/>
            <person name="Kiyomitsu T."/>
            <person name="Goshima G."/>
            <person name="Toyoda Y."/>
            <person name="Yanagida M."/>
        </authorList>
    </citation>
    <scope>FUNCTION</scope>
    <scope>INTERACTION WITH DSN1 AND MIS12</scope>
    <scope>IDENTIFICATION BY MASS SPECTROMETRY</scope>
</reference>
<reference key="8">
    <citation type="journal article" date="2004" name="Reproduction">
        <title>The protein encoded by cancer/testis gene D40/AF15q14 is localized in spermatocytes, acrosomes of spermatids and ejaculated spermatozoa.</title>
        <authorList>
            <person name="Sasao T."/>
            <person name="Itoh N."/>
            <person name="Takano H."/>
            <person name="Watanabe S."/>
            <person name="Wei G."/>
            <person name="Tsukamoto T."/>
            <person name="Kuzumaki N."/>
            <person name="Takimoto M."/>
        </authorList>
    </citation>
    <scope>SUBCELLULAR LOCATION</scope>
</reference>
<reference key="9">
    <citation type="journal article" date="2007" name="Dev. Cell">
        <title>Human Blinkin/AF15q14 is required for chromosome alignment and the mitotic checkpoint through direct interaction with Bub1 and BubR1.</title>
        <authorList>
            <person name="Kiyomitsu T."/>
            <person name="Obuse C."/>
            <person name="Yanagida M."/>
        </authorList>
    </citation>
    <scope>FUNCTION</scope>
    <scope>SUBCELLULAR LOCATION</scope>
    <scope>INTERACTION WITH BUB1; BUB1B; NSL1; DSN1 AND ZWINT</scope>
</reference>
<reference key="10">
    <citation type="journal article" date="2008" name="Mol. Biol. Cell">
        <title>KNL1 and the CENP-H/I/K complex coordinately direct kinetochore assembly in vertebrates.</title>
        <authorList>
            <person name="Cheeseman I.M."/>
            <person name="Hori T."/>
            <person name="Fukagawa T."/>
            <person name="Desai A."/>
        </authorList>
    </citation>
    <scope>FUNCTION</scope>
    <scope>SUBCELLULAR LOCATION</scope>
</reference>
<reference key="11">
    <citation type="journal article" date="2008" name="Mol. Cell">
        <title>Kinase-selective enrichment enables quantitative phosphoproteomics of the kinome across the cell cycle.</title>
        <authorList>
            <person name="Daub H."/>
            <person name="Olsen J.V."/>
            <person name="Bairlein M."/>
            <person name="Gnad F."/>
            <person name="Oppermann F.S."/>
            <person name="Korner R."/>
            <person name="Greff Z."/>
            <person name="Keri G."/>
            <person name="Stemmann O."/>
            <person name="Mann M."/>
        </authorList>
    </citation>
    <scope>PHOSPHORYLATION [LARGE SCALE ANALYSIS] AT SER-1076</scope>
    <scope>IDENTIFICATION BY MASS SPECTROMETRY [LARGE SCALE ANALYSIS]</scope>
    <source>
        <tissue>Cervix carcinoma</tissue>
    </source>
</reference>
<reference key="12">
    <citation type="journal article" date="2008" name="Proc. Natl. Acad. Sci. U.S.A.">
        <title>A quantitative atlas of mitotic phosphorylation.</title>
        <authorList>
            <person name="Dephoure N."/>
            <person name="Zhou C."/>
            <person name="Villen J."/>
            <person name="Beausoleil S.A."/>
            <person name="Bakalarski C.E."/>
            <person name="Elledge S.J."/>
            <person name="Gygi S.P."/>
        </authorList>
    </citation>
    <scope>PHOSPHORYLATION [LARGE SCALE ANALYSIS] AT SER-32; SER-60; SER-1076; SER-1773 AND SER-1845</scope>
    <scope>IDENTIFICATION BY MASS SPECTROMETRY [LARGE SCALE ANALYSIS]</scope>
    <source>
        <tissue>Cervix carcinoma</tissue>
    </source>
</reference>
<reference key="13">
    <citation type="journal article" date="2009" name="Cell">
        <title>Protein architecture of the human kinetochore microtubule attachment site.</title>
        <authorList>
            <person name="Wan X."/>
            <person name="O'Quinn R.P."/>
            <person name="Pierce H.L."/>
            <person name="Joglekar A.P."/>
            <person name="Gall W.E."/>
            <person name="DeLuca J.G."/>
            <person name="Carroll C.W."/>
            <person name="Liu S.-T."/>
            <person name="Yen T.J."/>
            <person name="McEwen B.F."/>
            <person name="Stukenberg P.T."/>
            <person name="Desai A."/>
            <person name="Salmon E.D."/>
        </authorList>
    </citation>
    <scope>SUBCELLULAR LOCATION</scope>
</reference>
<reference key="14">
    <citation type="journal article" date="2009" name="PLoS ONE">
        <title>Roles for the conserved spc105p/kre28p complex in kinetochore-microtubule binding and the spindle assembly checkpoint.</title>
        <authorList>
            <person name="Pagliuca C."/>
            <person name="Draviam V.M."/>
            <person name="Marco E."/>
            <person name="Sorger P.K."/>
            <person name="De Wulf P."/>
        </authorList>
    </citation>
    <scope>FUNCTION</scope>
    <scope>IDENTIFICATION IN THE KNL1 COMPLEX</scope>
    <scope>SUBCELLULAR LOCATION</scope>
</reference>
<reference key="15">
    <citation type="journal article" date="2009" name="Sci. Signal.">
        <title>Quantitative phosphoproteomic analysis of T cell receptor signaling reveals system-wide modulation of protein-protein interactions.</title>
        <authorList>
            <person name="Mayya V."/>
            <person name="Lundgren D.H."/>
            <person name="Hwang S.-I."/>
            <person name="Rezaul K."/>
            <person name="Wu L."/>
            <person name="Eng J.K."/>
            <person name="Rodionov V."/>
            <person name="Han D.K."/>
        </authorList>
    </citation>
    <scope>PHOSPHORYLATION [LARGE SCALE ANALYSIS] AT SER-1076</scope>
    <scope>IDENTIFICATION BY MASS SPECTROMETRY [LARGE SCALE ANALYSIS]</scope>
    <source>
        <tissue>Leukemic T-cell</tissue>
    </source>
</reference>
<reference key="16">
    <citation type="journal article" date="2010" name="J. Cell Biol.">
        <title>Inner centromere formation requires hMis14, a trident kinetochore protein that specifically recruits HP1 to human chromosomes.</title>
        <authorList>
            <person name="Kiyomitsu T."/>
            <person name="Iwasaki O."/>
            <person name="Obuse C."/>
            <person name="Yanagida M."/>
        </authorList>
    </citation>
    <scope>INTERACTION WITH NSL1</scope>
</reference>
<reference key="17">
    <citation type="journal article" date="2010" name="J. Cell Biol.">
        <title>The MIS12 complex is a protein interaction hub for outer kinetochore assembly.</title>
        <authorList>
            <person name="Petrovic A."/>
            <person name="Pasqualato S."/>
            <person name="Dube P."/>
            <person name="Krenn V."/>
            <person name="Santaguida S."/>
            <person name="Cittaro D."/>
            <person name="Monzani S."/>
            <person name="Massimiliano L."/>
            <person name="Keller J."/>
            <person name="Tarricone A."/>
            <person name="Maiolica A."/>
            <person name="Stark H."/>
            <person name="Musacchio A."/>
        </authorList>
    </citation>
    <scope>INTERACTION WITH NSL1</scope>
    <scope>SUBCELLULAR LOCATION</scope>
</reference>
<reference key="18">
    <citation type="journal article" date="2010" name="Sci. Signal.">
        <title>Quantitative phosphoproteomics reveals widespread full phosphorylation site occupancy during mitosis.</title>
        <authorList>
            <person name="Olsen J.V."/>
            <person name="Vermeulen M."/>
            <person name="Santamaria A."/>
            <person name="Kumar C."/>
            <person name="Miller M.L."/>
            <person name="Jensen L.J."/>
            <person name="Gnad F."/>
            <person name="Cox J."/>
            <person name="Jensen T.S."/>
            <person name="Nigg E.A."/>
            <person name="Brunak S."/>
            <person name="Mann M."/>
        </authorList>
    </citation>
    <scope>PHOSPHORYLATION [LARGE SCALE ANALYSIS] AT THR-539; SER-956; SER-1076 AND SER-1831</scope>
    <scope>IDENTIFICATION BY MASS SPECTROMETRY [LARGE SCALE ANALYSIS]</scope>
    <source>
        <tissue>Cervix carcinoma</tissue>
    </source>
</reference>
<reference key="19">
    <citation type="journal article" date="2011" name="Mol. Cell. Biol.">
        <title>Protein interaction domain mapping of human kinetochore protein Blinkin reveals a consensus motif for binding of spindle assembly checkpoint proteins Bub1 and BubR1.</title>
        <authorList>
            <person name="Kiyomitsu T."/>
            <person name="Murakami H."/>
            <person name="Yanagida M."/>
        </authorList>
    </citation>
    <scope>FUNCTION</scope>
    <scope>INTERACTION WITH ZWINT; NSL1; BUB1 AND BUB1B</scope>
</reference>
<reference key="20">
    <citation type="journal article" date="2012" name="Biomol. NMR. Assign.">
        <title>1H, 13C and 15N resonance assignments of the kinetochore localisation domain of BUBR1, a central component of the spindle assembly checkpoint.</title>
        <authorList>
            <person name="Simpson P.J."/>
            <person name="Cota E."/>
            <person name="Bolanos-Garcia V.M."/>
        </authorList>
    </citation>
    <scope>INTERACTION WITH BUB1B</scope>
</reference>
<reference key="21">
    <citation type="journal article" date="2012" name="Nat. Cell Biol.">
        <title>MPS1/Mph1 phosphorylates the kinetochore protein KNL1/Spc7 to recruit SAC components.</title>
        <authorList>
            <person name="Yamagishi Y."/>
            <person name="Yang C.H."/>
            <person name="Tanno Y."/>
            <person name="Watanabe Y."/>
        </authorList>
    </citation>
    <scope>SUBCELLULAR LOCATION</scope>
    <scope>PHOSPHORYLATION AT THR-901</scope>
</reference>
<reference key="22">
    <citation type="journal article" date="2013" name="J. Proteome Res.">
        <title>Toward a comprehensive characterization of a human cancer cell phosphoproteome.</title>
        <authorList>
            <person name="Zhou H."/>
            <person name="Di Palma S."/>
            <person name="Preisinger C."/>
            <person name="Peng M."/>
            <person name="Polat A.N."/>
            <person name="Heck A.J."/>
            <person name="Mohammed S."/>
        </authorList>
    </citation>
    <scope>PHOSPHORYLATION [LARGE SCALE ANALYSIS] AT SER-32; SER-60; THR-539; SER-578; SER-584; THR-586; SER-767; SER-956; SER-1039; SER-1076; SER-1088; SER-1448; SER-1675; SER-1845 AND SER-1860</scope>
    <scope>IDENTIFICATION BY MASS SPECTROMETRY [LARGE SCALE ANALYSIS]</scope>
    <source>
        <tissue>Cervix carcinoma</tissue>
        <tissue>Erythroleukemia</tissue>
    </source>
</reference>
<reference key="23">
    <citation type="journal article" date="2014" name="Structure">
        <title>Substrate-specific activation of the mitotic kinase Bub1 through intramolecular autophosphorylation and kinetochore targeting.</title>
        <authorList>
            <person name="Lin Z."/>
            <person name="Jia L."/>
            <person name="Tomchick D.R."/>
            <person name="Luo X."/>
            <person name="Yu H."/>
        </authorList>
    </citation>
    <scope>FUNCTION</scope>
</reference>
<reference key="24">
    <citation type="journal article" date="2015" name="Nat. Commun.">
        <title>A quantitative description of Ndc80 complex linkage to human kinetochores.</title>
        <authorList>
            <person name="Suzuki A."/>
            <person name="Badger B.L."/>
            <person name="Salmon E.D."/>
        </authorList>
    </citation>
    <scope>SUBCELLULAR LOCATION</scope>
</reference>
<reference key="25">
    <citation type="journal article" date="2016" name="Cell">
        <title>Structure of the MIS12 Complex and Molecular Basis of Its Interaction with CENP-C at Human Kinetochores.</title>
        <authorList>
            <person name="Petrovic A."/>
            <person name="Keller J."/>
            <person name="Liu Y."/>
            <person name="Overlack K."/>
            <person name="John J."/>
            <person name="Dimitrova Y.N."/>
            <person name="Jenni S."/>
            <person name="van Gerwen S."/>
            <person name="Stege P."/>
            <person name="Wohlgemuth S."/>
            <person name="Rombaut P."/>
            <person name="Herzog F."/>
            <person name="Harrison S.C."/>
            <person name="Vetter I.R."/>
            <person name="Musacchio A."/>
        </authorList>
    </citation>
    <scope>FUNCTION</scope>
    <scope>IDENTIFICATION IN THE KNL1 COMPLEX</scope>
    <scope>INTERACTION WITH MIS12</scope>
    <scope>IDENTIFICATION BY MASS SPECTROMETRY</scope>
</reference>
<reference key="26">
    <citation type="journal article" date="2016" name="Hum. Genet.">
        <title>A novel homozygous splicing mutation of CASC5 causes primary microcephaly in a large Pakistani family.</title>
        <authorList>
            <person name="Szczepanski S."/>
            <person name="Hussain M.S."/>
            <person name="Sur I."/>
            <person name="Altmueller J."/>
            <person name="Thiele H."/>
            <person name="Abdullah U."/>
            <person name="Waseem S.S."/>
            <person name="Moawia A."/>
            <person name="Nuernberg G."/>
            <person name="Noegel A.A."/>
            <person name="Baig S.M."/>
            <person name="Nuernberg P."/>
        </authorList>
    </citation>
    <scope>SUBCELLULAR LOCATION</scope>
    <scope>INVOLVEMENT IN MCPH4</scope>
</reference>
<reference key="27">
    <citation type="journal article" date="2016" name="J. Cell Biol.">
        <title>The Ska complex promotes Aurora B activity to ensure chromosome biorientation.</title>
        <authorList>
            <person name="Redli P.M."/>
            <person name="Gasic I."/>
            <person name="Meraldi P."/>
            <person name="Nigg E.A."/>
            <person name="Santamaria A."/>
        </authorList>
    </citation>
    <scope>PHOSPHORYLATION AT SER-24</scope>
</reference>
<reference key="28">
    <citation type="journal article" date="2017" name="Dev. Cell">
        <title>Mps1 Regulates Kinetochore-Microtubule Attachment Stability via the Ska Complex to Ensure Error-Free Chromosome Segregation.</title>
        <authorList>
            <person name="Maciejowski J."/>
            <person name="Drechsler H."/>
            <person name="Grundner-Culemann K."/>
            <person name="Ballister E.R."/>
            <person name="Rodriguez-Rodriguez J.A."/>
            <person name="Rodriguez-Bravo V."/>
            <person name="Jones M.J.K."/>
            <person name="Foley E."/>
            <person name="Lampson M.A."/>
            <person name="Daub H."/>
            <person name="McAinsh A.D."/>
            <person name="Jallepalli P.V."/>
        </authorList>
    </citation>
    <scope>PHOSPHORYLATION AT SER-1831 AND SER-1834</scope>
</reference>
<reference key="29">
    <citation type="journal article" date="2024" name="Am. J. Med. Genet. A">
        <title>A novel KNL1 intronic splicing variant likely destabilizes the KMN complex, causing primary microcephaly.</title>
        <authorList>
            <person name="Fellows B.J."/>
            <person name="Tolezano G.C."/>
            <person name="Pires S.F."/>
            <person name="Ruegg M.S.G."/>
            <person name="Knapp K.M."/>
            <person name="Krepischi A.C.V."/>
            <person name="Bicknell L.S."/>
        </authorList>
    </citation>
    <scope>INVOLVEMENT IN MCPH4</scope>
</reference>
<reference evidence="44" key="30">
    <citation type="journal article" date="2011" name="Structure">
        <title>Structure of a Blinkin-BUBR1 complex reveals an interaction crucial for kinetochore-mitotic checkpoint regulation via an unanticipated binding Site.</title>
        <authorList>
            <person name="Bolanos-Garcia V.M."/>
            <person name="Lischetti T."/>
            <person name="Matak-Vinkovic D."/>
            <person name="Cota E."/>
            <person name="Simpson P.J."/>
            <person name="Chirgadze D.Y."/>
            <person name="Spring D.R."/>
            <person name="Robinson C.V."/>
            <person name="Nilsson J."/>
            <person name="Blundell T.L."/>
        </authorList>
    </citation>
    <scope>X-RAY CRYSTALLOGRAPHY (2.20 ANGSTROMS) OF 234-252</scope>
    <scope>FUNCTION</scope>
    <scope>INTERACTION WITH BUB1B</scope>
</reference>
<reference key="31">
    <citation type="journal article" date="2011" name="Structure">
        <authorList>
            <person name="Bolanos-Garcia V.M."/>
            <person name="Lischetti T."/>
            <person name="Matak-Vinkovic D."/>
            <person name="Cota E."/>
            <person name="Simpson P.J."/>
            <person name="Chirgadze D.Y."/>
            <person name="Spring D.R."/>
            <person name="Robinson C.V."/>
            <person name="Nilsson J."/>
            <person name="Blundell T.L."/>
        </authorList>
    </citation>
    <scope>ERRATUM OF PUBMED:22000412</scope>
</reference>
<reference evidence="45" key="32">
    <citation type="journal article" date="2012" name="J. Cell Biol.">
        <title>Structural analysis reveals features of the spindle checkpoint kinase Bub1-kinetochore subunit Knl1 interaction.</title>
        <authorList>
            <person name="Krenn V."/>
            <person name="Wehenkel A."/>
            <person name="Li X."/>
            <person name="Santaguida S."/>
            <person name="Musacchio A."/>
        </authorList>
    </citation>
    <scope>X-RAY CRYSTALLOGRAPHY (2.60 ANGSTROMS) OF 176-226</scope>
    <scope>FUNCTION</scope>
    <scope>INTERACTION WITH BUB1 AND BUB1B</scope>
</reference>
<reference evidence="46 47" key="33">
    <citation type="journal article" date="2014" name="Mol. Cell">
        <title>Modular assembly of RWD domains on the Mis12 complex underlies outer kinetochore organization.</title>
        <authorList>
            <person name="Petrovic A."/>
            <person name="Mosalaganti S."/>
            <person name="Keller J."/>
            <person name="Mattiuzzo M."/>
            <person name="Overlack K."/>
            <person name="Krenn V."/>
            <person name="De Antoni A."/>
            <person name="Wohlgemuth S."/>
            <person name="Cecatiello V."/>
            <person name="Pasqualato S."/>
            <person name="Raunser S."/>
            <person name="Musacchio A."/>
        </authorList>
    </citation>
    <scope>X-RAY CRYSTALLOGRAPHY (2.50 ANGSTROMS) OF 2131-2337</scope>
    <scope>IDENTIFICATION IN THE KMN NETWORK AND THE KNL1 COMPLEX</scope>
    <scope>INTERACTION WITH NSL1</scope>
</reference>
<reference evidence="48" key="34">
    <citation type="journal article" date="2018" name="Structure">
        <title>KNL1 Binding to PP1 and Microtubules Is Mutually Exclusive.</title>
        <authorList>
            <person name="Bajaj R."/>
            <person name="Bollen M."/>
            <person name="Peti W."/>
            <person name="Page R."/>
        </authorList>
    </citation>
    <scope>X-RAY CRYSTALLOGRAPHY (2.95 ANGSTROMS) OF 23-80 IN COMPLEX WITH PPP1CA</scope>
    <scope>FUNCTION</scope>
    <scope>INTERACTION WITH PPP1CA AND PPP1CC</scope>
    <scope>PHOSPHORYLATION AT SER-24 AND SER-60</scope>
    <scope>MUTAGENESIS OF 24-SER-SER-25; 25-SER--LYS-28 AND SER-60</scope>
</reference>
<reference evidence="50" key="35">
    <citation type="journal article" date="2024" name="Nat. Struct. Mol. Biol.">
        <title>Structure of the human KMN complex and implications for regulation of its assembly.</title>
        <authorList>
            <person name="Polley S."/>
            <person name="Raisch T."/>
            <person name="Ghetti S."/>
            <person name="Koerner M."/>
            <person name="Terbeck M."/>
            <person name="Graeter F."/>
            <person name="Raunser S."/>
            <person name="Aponte-Santamaria C."/>
            <person name="Vetter I.R."/>
            <person name="Musacchio A."/>
        </authorList>
    </citation>
    <scope>STRUCTURE BY ELECTRON MICROSCOPY (4.50 ANGSTROMS) OF 2021-2342</scope>
    <scope>FUNCTION</scope>
    <scope>IDENTIFICATION IN THE KMN NETWORK AND THE KNL1 COMPLEX</scope>
    <scope>INTERACTION WITH THE MIS12 COMPLEX</scope>
    <scope>SUBCELLULAR LOCATION</scope>
</reference>
<reference evidence="49" key="36">
    <citation type="journal article" date="2024" name="Nat. Struct. Mol. Biol.">
        <title>Structure of the human outer kinetochore KMN network complex.</title>
        <authorList>
            <person name="Yatskevich S."/>
            <person name="Yang J."/>
            <person name="Bellini D."/>
            <person name="Zhang Z."/>
            <person name="Barford D."/>
        </authorList>
    </citation>
    <scope>STRUCTURE BY ELECTRON MICROSCOPY (3.00 ANGSTROMS)</scope>
    <scope>FUNCTION</scope>
    <scope>IDENTIFICATION IN THE KMN NETWORK AND THE KNL1 COMPLEX</scope>
    <scope>INTERACTION WITH THE MIS12 COMPLEX</scope>
</reference>
<reference key="37">
    <citation type="journal article" date="2008" name="Nature">
        <title>DNA sequencing of a cytogenetically normal acute myeloid leukaemia genome.</title>
        <authorList>
            <person name="Ley T.J."/>
            <person name="Mardis E.R."/>
            <person name="Ding L."/>
            <person name="Fulton B."/>
            <person name="McLellan M.D."/>
            <person name="Chen K."/>
            <person name="Dooling D."/>
            <person name="Dunford-Shore B.H."/>
            <person name="McGrath S."/>
            <person name="Hickenbotham M."/>
            <person name="Cook L."/>
            <person name="Abbott R."/>
            <person name="Larson D.E."/>
            <person name="Koboldt D.C."/>
            <person name="Pohl C."/>
            <person name="Smith S."/>
            <person name="Hawkins A."/>
            <person name="Abbott S."/>
            <person name="Locke D."/>
            <person name="Hillier L.W."/>
            <person name="Miner T."/>
            <person name="Fulton L."/>
            <person name="Magrini V."/>
            <person name="Wylie T."/>
            <person name="Glasscock J."/>
            <person name="Conyers J."/>
            <person name="Sander N."/>
            <person name="Shi X."/>
            <person name="Osborne J.R."/>
            <person name="Minx P."/>
            <person name="Gordon D."/>
            <person name="Chinwalla A."/>
            <person name="Zhao Y."/>
            <person name="Ries R.E."/>
            <person name="Payton J.E."/>
            <person name="Westervelt P."/>
            <person name="Tomasson M.H."/>
            <person name="Watson M."/>
            <person name="Baty J."/>
            <person name="Ivanovich J."/>
            <person name="Heath S."/>
            <person name="Shannon W.D."/>
            <person name="Nagarajan R."/>
            <person name="Walter M.J."/>
            <person name="Link D.C."/>
            <person name="Graubert T.A."/>
            <person name="DiPersio J.F."/>
            <person name="Wilson R.K."/>
        </authorList>
    </citation>
    <scope>VARIANT [LARGE SCALE ANALYSIS] THR-598</scope>
</reference>
<reference key="38">
    <citation type="journal article" date="2012" name="Hum. Mol. Genet.">
        <title>Kinetochore KMN network gene CASC5 mutated in primary microcephaly.</title>
        <authorList>
            <person name="Genin A."/>
            <person name="Desir J."/>
            <person name="Lambert N."/>
            <person name="Biervliet M."/>
            <person name="Van Der Aa N."/>
            <person name="Pierquin G."/>
            <person name="Killian A."/>
            <person name="Tosi M."/>
            <person name="Urbina M."/>
            <person name="Lefort A."/>
            <person name="Libert F."/>
            <person name="Pirson I."/>
            <person name="Abramowicz M."/>
        </authorList>
    </citation>
    <scope>VARIANT MCPH4 ILE-2041</scope>
</reference>
<reference key="39">
    <citation type="journal article" date="2016" name="Am. J. Med. Genet. A">
        <title>First clinical report of an infant with microcephaly and CASC5 mutations.</title>
        <authorList>
            <person name="Zarate Y.A."/>
            <person name="Kaylor J.A."/>
            <person name="Bosanko K."/>
            <person name="Lau S."/>
            <person name="Vargas J."/>
            <person name="Gao H."/>
        </authorList>
    </citation>
    <scope>VARIANT MCPH4 GLY-2187</scope>
</reference>
<reference key="40">
    <citation type="journal article" date="2016" name="Neurogenetics">
        <title>Refining the phenotype associated with CASC5 mutation.</title>
        <authorList>
            <person name="Saadi A."/>
            <person name="Verny F."/>
            <person name="Siquier-Pernet K."/>
            <person name="Bole-Feysot C."/>
            <person name="Nitschke P."/>
            <person name="Munnich A."/>
            <person name="Abada-Dendib M."/>
            <person name="Chaouch M."/>
            <person name="Abramowicz M."/>
            <person name="Colleaux L."/>
        </authorList>
    </citation>
    <scope>VARIANT MCPH4 ILE-2041</scope>
</reference>
<keyword id="KW-0002">3D-structure</keyword>
<keyword id="KW-0025">Alternative splicing</keyword>
<keyword id="KW-0131">Cell cycle</keyword>
<keyword id="KW-0132">Cell division</keyword>
<keyword id="KW-0137">Centromere</keyword>
<keyword id="KW-0160">Chromosomal rearrangement</keyword>
<keyword id="KW-0158">Chromosome</keyword>
<keyword id="KW-0159">Chromosome partition</keyword>
<keyword id="KW-0175">Coiled coil</keyword>
<keyword id="KW-0963">Cytoplasm</keyword>
<keyword id="KW-0225">Disease variant</keyword>
<keyword id="KW-0991">Intellectual disability</keyword>
<keyword id="KW-0995">Kinetochore</keyword>
<keyword id="KW-0498">Mitosis</keyword>
<keyword id="KW-0539">Nucleus</keyword>
<keyword id="KW-0597">Phosphoprotein</keyword>
<keyword id="KW-0905">Primary microcephaly</keyword>
<keyword id="KW-1267">Proteomics identification</keyword>
<keyword id="KW-1185">Reference proteome</keyword>
<keyword id="KW-0677">Repeat</keyword>
<organism>
    <name type="scientific">Homo sapiens</name>
    <name type="common">Human</name>
    <dbReference type="NCBI Taxonomy" id="9606"/>
    <lineage>
        <taxon>Eukaryota</taxon>
        <taxon>Metazoa</taxon>
        <taxon>Chordata</taxon>
        <taxon>Craniata</taxon>
        <taxon>Vertebrata</taxon>
        <taxon>Euteleostomi</taxon>
        <taxon>Mammalia</taxon>
        <taxon>Eutheria</taxon>
        <taxon>Euarchontoglires</taxon>
        <taxon>Primates</taxon>
        <taxon>Haplorrhini</taxon>
        <taxon>Catarrhini</taxon>
        <taxon>Hominidae</taxon>
        <taxon>Homo</taxon>
    </lineage>
</organism>
<evidence type="ECO:0000250" key="1">
    <source>
        <dbReference type="UniProtKB" id="Q66JQ7"/>
    </source>
</evidence>
<evidence type="ECO:0000255" key="2"/>
<evidence type="ECO:0000256" key="3">
    <source>
        <dbReference type="SAM" id="MobiDB-lite"/>
    </source>
</evidence>
<evidence type="ECO:0000269" key="4">
    <source>
    </source>
</evidence>
<evidence type="ECO:0000269" key="5">
    <source>
    </source>
</evidence>
<evidence type="ECO:0000269" key="6">
    <source>
    </source>
</evidence>
<evidence type="ECO:0000269" key="7">
    <source>
    </source>
</evidence>
<evidence type="ECO:0000269" key="8">
    <source>
    </source>
</evidence>
<evidence type="ECO:0000269" key="9">
    <source>
    </source>
</evidence>
<evidence type="ECO:0000269" key="10">
    <source>
    </source>
</evidence>
<evidence type="ECO:0000269" key="11">
    <source>
    </source>
</evidence>
<evidence type="ECO:0000269" key="12">
    <source>
    </source>
</evidence>
<evidence type="ECO:0000269" key="13">
    <source>
    </source>
</evidence>
<evidence type="ECO:0000269" key="14">
    <source>
    </source>
</evidence>
<evidence type="ECO:0000269" key="15">
    <source>
    </source>
</evidence>
<evidence type="ECO:0000269" key="16">
    <source>
    </source>
</evidence>
<evidence type="ECO:0000269" key="17">
    <source>
    </source>
</evidence>
<evidence type="ECO:0000269" key="18">
    <source>
    </source>
</evidence>
<evidence type="ECO:0000269" key="19">
    <source>
    </source>
</evidence>
<evidence type="ECO:0000269" key="20">
    <source>
    </source>
</evidence>
<evidence type="ECO:0000269" key="21">
    <source>
    </source>
</evidence>
<evidence type="ECO:0000269" key="22">
    <source>
    </source>
</evidence>
<evidence type="ECO:0000269" key="23">
    <source>
    </source>
</evidence>
<evidence type="ECO:0000269" key="24">
    <source>
    </source>
</evidence>
<evidence type="ECO:0000269" key="25">
    <source>
    </source>
</evidence>
<evidence type="ECO:0000269" key="26">
    <source>
    </source>
</evidence>
<evidence type="ECO:0000269" key="27">
    <source>
    </source>
</evidence>
<evidence type="ECO:0000269" key="28">
    <source>
    </source>
</evidence>
<evidence type="ECO:0000269" key="29">
    <source>
    </source>
</evidence>
<evidence type="ECO:0000269" key="30">
    <source>
    </source>
</evidence>
<evidence type="ECO:0000269" key="31">
    <source>
    </source>
</evidence>
<evidence type="ECO:0000303" key="32">
    <source>
    </source>
</evidence>
<evidence type="ECO:0000303" key="33">
    <source>
    </source>
</evidence>
<evidence type="ECO:0000303" key="34">
    <source>
    </source>
</evidence>
<evidence type="ECO:0000305" key="35"/>
<evidence type="ECO:0000305" key="36">
    <source>
    </source>
</evidence>
<evidence type="ECO:0000305" key="37">
    <source>
    </source>
</evidence>
<evidence type="ECO:0000305" key="38">
    <source>
    </source>
</evidence>
<evidence type="ECO:0000305" key="39">
    <source>
    </source>
</evidence>
<evidence type="ECO:0000305" key="40">
    <source>
    </source>
</evidence>
<evidence type="ECO:0000305" key="41">
    <source>
    </source>
</evidence>
<evidence type="ECO:0000305" key="42">
    <source>
    </source>
</evidence>
<evidence type="ECO:0000312" key="43">
    <source>
        <dbReference type="HGNC" id="HGNC:24054"/>
    </source>
</evidence>
<evidence type="ECO:0007744" key="44">
    <source>
        <dbReference type="PDB" id="3SI5"/>
    </source>
</evidence>
<evidence type="ECO:0007744" key="45">
    <source>
        <dbReference type="PDB" id="4A1G"/>
    </source>
</evidence>
<evidence type="ECO:0007744" key="46">
    <source>
        <dbReference type="PDB" id="4NF9"/>
    </source>
</evidence>
<evidence type="ECO:0007744" key="47">
    <source>
        <dbReference type="PDB" id="4NFA"/>
    </source>
</evidence>
<evidence type="ECO:0007744" key="48">
    <source>
        <dbReference type="PDB" id="6CZO"/>
    </source>
</evidence>
<evidence type="ECO:0007744" key="49">
    <source>
        <dbReference type="PDB" id="8PPR"/>
    </source>
</evidence>
<evidence type="ECO:0007744" key="50">
    <source>
        <dbReference type="PDB" id="8Q5H"/>
    </source>
</evidence>
<evidence type="ECO:0007744" key="51">
    <source>
    </source>
</evidence>
<evidence type="ECO:0007744" key="52">
    <source>
    </source>
</evidence>
<evidence type="ECO:0007744" key="53">
    <source>
    </source>
</evidence>
<evidence type="ECO:0007744" key="54">
    <source>
    </source>
</evidence>
<evidence type="ECO:0007744" key="55">
    <source>
    </source>
</evidence>
<evidence type="ECO:0007829" key="56">
    <source>
        <dbReference type="PDB" id="3SI5"/>
    </source>
</evidence>
<evidence type="ECO:0007829" key="57">
    <source>
        <dbReference type="PDB" id="4A1G"/>
    </source>
</evidence>
<evidence type="ECO:0007829" key="58">
    <source>
        <dbReference type="PDB" id="4NF9"/>
    </source>
</evidence>
<evidence type="ECO:0007829" key="59">
    <source>
        <dbReference type="PDB" id="4NFA"/>
    </source>
</evidence>
<evidence type="ECO:0007829" key="60">
    <source>
        <dbReference type="PDB" id="6CZO"/>
    </source>
</evidence>
<evidence type="ECO:0007829" key="61">
    <source>
        <dbReference type="PDB" id="8PPR"/>
    </source>
</evidence>
<comment type="function">
    <text evidence="1 8 9 10 12 14 15 17 21 26 28 30 31">Acts as a component of the outer kinetochore KNL1 complex that serves as a docking point for spindle assembly checkpoint components and mediates microtubule-kinetochore interactions (PubMed:15502821, PubMed:17981135, PubMed:18045986, PubMed:19893618, PubMed:21199919, PubMed:22000412, PubMed:22331848, PubMed:27881301, PubMed:30100357). Kinetochores, consisting of a centromere-associated inner segment and a microtubule-contacting outer segment, play a crucial role in chromosome segregation by mediating the physical connection between centromeric DNA and spindle microtubules (PubMed:18045986, PubMed:19893618, PubMed:27881301). The outer kinetochore is made up of the ten-subunit KMN network, comprising the MIS12, NDC80 and KNL1 complexes, and auxiliary microtubule-associated components; together they connect the outer kinetochore with the inner kinetochore, bind microtubules, and mediate interactions with mitotic checkpoint proteins that delay anaphase until chromosomes are bioriented on the spindle (PubMed:17981135, PubMed:19893618, PubMed:22000412, PubMed:38459127, PubMed:38459128). Required for kinetochore binding by a distinct subset of kMAPs (kinetochore-bound microtubule-associated proteins) and motors (PubMed:19893618). Acts in coordination with CENPK to recruit the NDC80 complex to the outer kinetochore (PubMed:18045986, PubMed:27881301). Can bind either to microtubules or to the protein phosphatase 1 (PP1) catalytic subunits PPP1CA and PPP1CC (via overlapping binding sites), it has higher affinity for PP1 (PubMed:30100357). Recruits MAD2L1 to the kinetochore and also directly links BUB1 and BUB1B to the kinetochore (PubMed:17981135, PubMed:19893618, PubMed:22000412, PubMed:22331848, PubMed:25308863). In addition to orienting mitotic chromosomes, it is also essential for alignment of homologous chromosomes during meiotic metaphase I (By similarity). In meiosis I, required to activate the spindle assembly checkpoint at unattached kinetochores to correct erroneous kinetochore-microtubule attachments (By similarity).</text>
</comment>
<comment type="subunit">
    <text evidence="9 13 14 15 16 17 20 26 28 30 31 36 37 38 39 41">Component of the KNL1 complex composed of KNL1 and ZWINT (Probable) (PubMed:24530301, PubMed:27881301, PubMed:38459127, PubMed:38459128). Part of the ten-subunit outer kinetochore KMN network that includes the KNL1, MIS12 and NDC80 complexes; a bioriented kinetochore contains approximately 150 copies of the network (PubMed:24530301, PubMed:38459127, PubMed:38459128). Interacts (via C-terminus) with the MIS12 complex subunits NSL1 (via C-terminus), PMF1 and DSN1; the interaction is direct (Probable) (PubMed:17981135, PubMed:20819937, PubMed:21199919, PubMed:24530301, PubMed:38459127, PubMed:38459128). Interacts (via N-terminal region) with BUB1B (via BUB1 N-terminal domain); the interaction is direct and is required for cell cycle arrest upon activation of the mitotic spindle assembly checkpoint (PubMed:17981135, PubMed:21199919, PubMed:22000412, PubMed:22201036, PubMed:22331848). Interacts (via N-terminal region) with BUB1 (via BUB1 N-terminal domain); the interaction is direct (PubMed:17981135, PubMed:21199919, PubMed:22331848). Interacts with the protein phosphatase PP1 subunit PPP1CA; the interaction is direct and mutually exclusive with binding to microtubules (PubMed:30100357). Interacts with the protein phosphatase PP1 subunit PPP1CC; the interaction is direct and mutually exclusive with binding to microtubules (PubMed:30100357).</text>
</comment>
<comment type="interaction">
    <interactant intactId="EBI-1001161">
        <id>Q8NG31</id>
    </interactant>
    <interactant intactId="EBI-748936">
        <id>O43683</id>
        <label>BUB1</label>
    </interactant>
    <organismsDiffer>false</organismsDiffer>
    <experiments>4</experiments>
</comment>
<comment type="interaction">
    <interactant intactId="EBI-1001161">
        <id>Q8NG31</id>
    </interactant>
    <interactant intactId="EBI-357253">
        <id>P62136</id>
        <label>PPP1CA</label>
    </interactant>
    <organismsDiffer>false</organismsDiffer>
    <experiments>3</experiments>
</comment>
<comment type="interaction">
    <interactant intactId="EBI-1001161">
        <id>Q8NG31</id>
    </interactant>
    <interactant intactId="EBI-356283">
        <id>P36873</id>
        <label>PPP1CC</label>
    </interactant>
    <organismsDiffer>false</organismsDiffer>
    <experiments>4</experiments>
</comment>
<comment type="interaction">
    <interactant intactId="EBI-10973816">
        <id>Q8NG31-2</id>
    </interactant>
    <interactant intactId="EBI-748936">
        <id>O43683</id>
        <label>BUB1</label>
    </interactant>
    <organismsDiffer>false</organismsDiffer>
    <experiments>3</experiments>
</comment>
<comment type="interaction">
    <interactant intactId="EBI-10973816">
        <id>Q8NG31-2</id>
    </interactant>
    <interactant intactId="EBI-1001438">
        <id>O60566</id>
        <label>BUB1B</label>
    </interactant>
    <organismsDiffer>false</organismsDiffer>
    <experiments>10</experiments>
</comment>
<comment type="subcellular location">
    <subcellularLocation>
        <location evidence="12 31">Nucleus</location>
    </subcellularLocation>
    <subcellularLocation>
        <location evidence="12 13 18 22 23 31">Chromosome</location>
        <location evidence="12 13 18 22 23 31">Centromere</location>
        <location evidence="12 13 18 22 23 31">Kinetochore</location>
    </subcellularLocation>
    <subcellularLocation>
        <location evidence="1">Cytoplasm</location>
    </subcellularLocation>
    <text evidence="1 12">Weakly expressed in interphase nuclei. Expression increases from prophase to late anaphase, but greatly diminishes from the telophase and cytokinesis to early G1 phase of cell cycle (PubMed:19893618). Localizes to the cytoplasm during meiotic prophase I and then the nucleus as meiosis progresses (By similarity).</text>
</comment>
<comment type="alternative products">
    <event type="alternative splicing"/>
    <isoform>
        <id>Q8NG31-1</id>
        <name>1</name>
        <sequence type="displayed"/>
    </isoform>
    <isoform>
        <id>Q8NG31-2</id>
        <name>2</name>
        <sequence type="described" ref="VSP_013795"/>
    </isoform>
    <isoform>
        <id>Q8NG31-3</id>
        <name>3</name>
        <sequence type="described" ref="VSP_013795 VSP_013796 VSP_013797"/>
    </isoform>
    <isoform>
        <id>Q8NG31-4</id>
        <name>4</name>
        <sequence type="described" ref="VSP_013795 VSP_018524 VSP_018525"/>
    </isoform>
</comment>
<comment type="tissue specificity">
    <text evidence="4 5 7">Highly expressed in testis, where it is localized in germ cells, in particular in spermatocytes and in the pre-acrosome of round spermatids. Detected in the acrosome of ejaculated spermatozoa. Detected in adult thymus, bone marrow, colon, small intestine, appendix and placenta, and in fetal liver and thymus.</text>
</comment>
<comment type="PTM">
    <text evidence="28">Phosphorylation by AURKB negatively regulates its interaction with protein phosphatase 1 (PP1) subunit PPP1CA and with microtubules.</text>
</comment>
<comment type="disease">
    <text evidence="6">A chromosomal aberration involving KNL1 is associated with acute myeloblastic leukemia (AML). Translocation t(11;15)(q23;q14) with KMT2A. May give rise to a KMT2A-KNL1 fusion protein.</text>
</comment>
<comment type="disease" evidence="19 24 25 29">
    <disease id="DI-02860">
        <name>Microcephaly 4, primary, autosomal recessive</name>
        <acronym>MCPH4</acronym>
        <description>A disease defined as a head circumference more than 3 standard deviations below the age-related mean. Brain weight is markedly reduced and the cerebral cortex is disproportionately small. Despite this marked reduction in size, the gyral pattern is relatively well preserved, with no major abnormality in cortical architecture. Affected individuals have mild to moderate intellectual disability. Primary microcephaly is further defined by the absence of other syndromic features or significant neurological deficits due to degenerative brain disorder.</description>
        <dbReference type="MIM" id="604321"/>
    </disease>
    <text>The disease is caused by variants affecting the gene represented in this entry.</text>
</comment>
<comment type="online information" name="Atlas of Genetics and Cytogenetics in Oncology and Haematology">
    <link uri="https://atlasgeneticsoncology.org/gene/318/AF15q14"/>
</comment>
<protein>
    <recommendedName>
        <fullName evidence="35">Outer kinetochore KNL1 complex subunit KNL1</fullName>
    </recommendedName>
    <alternativeName>
        <fullName>ALL1-fused gene from chromosome 15q14 protein</fullName>
        <shortName>AF15q14</shortName>
    </alternativeName>
    <alternativeName>
        <fullName>Bub-linking kinetochore protein</fullName>
        <shortName>Blinkin</shortName>
    </alternativeName>
    <alternativeName>
        <fullName>Cancer susceptibility candidate gene 5 protein</fullName>
    </alternativeName>
    <alternativeName>
        <fullName>Cancer/testis antigen 29</fullName>
        <shortName>CT29</shortName>
    </alternativeName>
    <alternativeName>
        <fullName>Kinetochore scaffold 1</fullName>
    </alternativeName>
    <alternativeName>
        <fullName>Kinetochore-null protein 1</fullName>
    </alternativeName>
    <alternativeName>
        <fullName>Protein CASC5</fullName>
    </alternativeName>
    <alternativeName>
        <fullName>Protein D40/AF15q14</fullName>
    </alternativeName>
</protein>
<accession>Q8NG31</accession>
<accession>Q8NHE1</accession>
<accession>Q8WXA6</accession>
<accession>Q9HCK2</accession>
<accession>Q9NR92</accession>
<name>KNL1_HUMAN</name>
<dbReference type="EMBL" id="AF248041">
    <property type="protein sequence ID" value="AAF97513.1"/>
    <property type="molecule type" value="mRNA"/>
</dbReference>
<dbReference type="EMBL" id="AF461041">
    <property type="protein sequence ID" value="AAL67803.1"/>
    <property type="molecule type" value="mRNA"/>
</dbReference>
<dbReference type="EMBL" id="AB022190">
    <property type="protein sequence ID" value="BAC05691.1"/>
    <property type="molecule type" value="mRNA"/>
</dbReference>
<dbReference type="EMBL" id="AF173994">
    <property type="protein sequence ID" value="AAM45143.1"/>
    <property type="molecule type" value="mRNA"/>
</dbReference>
<dbReference type="EMBL" id="AC022405">
    <property type="status" value="NOT_ANNOTATED_CDS"/>
    <property type="molecule type" value="Genomic_DNA"/>
</dbReference>
<dbReference type="EMBL" id="AB046790">
    <property type="protein sequence ID" value="BAB13396.1"/>
    <property type="molecule type" value="mRNA"/>
</dbReference>
<dbReference type="CCDS" id="CCDS42023.1">
    <molecule id="Q8NG31-1"/>
</dbReference>
<dbReference type="CCDS" id="CCDS42024.1">
    <molecule id="Q8NG31-2"/>
</dbReference>
<dbReference type="RefSeq" id="NP_653091.3">
    <molecule id="Q8NG31-2"/>
    <property type="nucleotide sequence ID" value="NM_144508.5"/>
</dbReference>
<dbReference type="RefSeq" id="NP_733468.3">
    <molecule id="Q8NG31-1"/>
    <property type="nucleotide sequence ID" value="NM_170589.5"/>
</dbReference>
<dbReference type="PDB" id="3SI5">
    <property type="method" value="X-ray"/>
    <property type="resolution" value="2.20 A"/>
    <property type="chains" value="X/Y=234-252"/>
</dbReference>
<dbReference type="PDB" id="4A1G">
    <property type="method" value="X-ray"/>
    <property type="resolution" value="2.60 A"/>
    <property type="chains" value="E/F/G/H=176-226"/>
</dbReference>
<dbReference type="PDB" id="4NF9">
    <property type="method" value="X-ray"/>
    <property type="resolution" value="2.80 A"/>
    <property type="chains" value="A/B=2117-2337"/>
</dbReference>
<dbReference type="PDB" id="4NFA">
    <property type="method" value="X-ray"/>
    <property type="resolution" value="2.50 A"/>
    <property type="chains" value="A=2131-2337"/>
</dbReference>
<dbReference type="PDB" id="6CZO">
    <property type="method" value="X-ray"/>
    <property type="resolution" value="2.95 A"/>
    <property type="chains" value="B/D=23-80"/>
</dbReference>
<dbReference type="PDB" id="8PPR">
    <property type="method" value="EM"/>
    <property type="resolution" value="3.00 A"/>
    <property type="chains" value="K=1-2342"/>
</dbReference>
<dbReference type="PDB" id="8Q5H">
    <property type="method" value="EM"/>
    <property type="resolution" value="4.50 A"/>
    <property type="chains" value="K=2021-2342"/>
</dbReference>
<dbReference type="PDBsum" id="3SI5"/>
<dbReference type="PDBsum" id="4A1G"/>
<dbReference type="PDBsum" id="4NF9"/>
<dbReference type="PDBsum" id="4NFA"/>
<dbReference type="PDBsum" id="6CZO"/>
<dbReference type="PDBsum" id="8PPR"/>
<dbReference type="PDBsum" id="8Q5H"/>
<dbReference type="BMRB" id="Q8NG31"/>
<dbReference type="EMDB" id="EMD-17814"/>
<dbReference type="EMDB" id="EMD-18179"/>
<dbReference type="EMDB" id="EMD-2549"/>
<dbReference type="SMR" id="Q8NG31"/>
<dbReference type="BioGRID" id="121354">
    <property type="interactions" value="136"/>
</dbReference>
<dbReference type="ComplexPortal" id="CPX-5644">
    <property type="entry name" value="Kinetochore KNL1 complex"/>
</dbReference>
<dbReference type="CORUM" id="Q8NG31"/>
<dbReference type="DIP" id="DIP-36474N"/>
<dbReference type="ELM" id="Q8NG31"/>
<dbReference type="FunCoup" id="Q8NG31">
    <property type="interactions" value="2026"/>
</dbReference>
<dbReference type="IntAct" id="Q8NG31">
    <property type="interactions" value="103"/>
</dbReference>
<dbReference type="MINT" id="Q8NG31"/>
<dbReference type="STRING" id="9606.ENSP00000335463"/>
<dbReference type="GlyCosmos" id="Q8NG31">
    <property type="glycosylation" value="1 site, 1 glycan"/>
</dbReference>
<dbReference type="GlyGen" id="Q8NG31">
    <property type="glycosylation" value="10 sites, 2 N-linked glycans (2 sites), 1 O-linked glycan (6 sites)"/>
</dbReference>
<dbReference type="iPTMnet" id="Q8NG31"/>
<dbReference type="PhosphoSitePlus" id="Q8NG31"/>
<dbReference type="BioMuta" id="KNL1"/>
<dbReference type="DMDM" id="223590239"/>
<dbReference type="CPTAC" id="CPTAC-5923"/>
<dbReference type="CPTAC" id="CPTAC-5924"/>
<dbReference type="jPOST" id="Q8NG31"/>
<dbReference type="MassIVE" id="Q8NG31"/>
<dbReference type="PaxDb" id="9606-ENSP00000335463"/>
<dbReference type="PeptideAtlas" id="Q8NG31"/>
<dbReference type="ProteomicsDB" id="73413">
    <molecule id="Q8NG31-1"/>
</dbReference>
<dbReference type="ProteomicsDB" id="73414">
    <molecule id="Q8NG31-2"/>
</dbReference>
<dbReference type="ProteomicsDB" id="73415">
    <molecule id="Q8NG31-3"/>
</dbReference>
<dbReference type="ProteomicsDB" id="73416">
    <molecule id="Q8NG31-4"/>
</dbReference>
<dbReference type="Pumba" id="Q8NG31"/>
<dbReference type="ABCD" id="Q8NG31">
    <property type="antibodies" value="1 sequenced antibody"/>
</dbReference>
<dbReference type="Antibodypedia" id="23122">
    <property type="antibodies" value="117 antibodies from 21 providers"/>
</dbReference>
<dbReference type="CPTC" id="Q8NG31">
    <property type="antibodies" value="1 antibody"/>
</dbReference>
<dbReference type="DNASU" id="57082"/>
<dbReference type="Ensembl" id="ENST00000346991.9">
    <molecule id="Q8NG31-1"/>
    <property type="protein sequence ID" value="ENSP00000335463.6"/>
    <property type="gene ID" value="ENSG00000137812.21"/>
</dbReference>
<dbReference type="Ensembl" id="ENST00000399668.7">
    <molecule id="Q8NG31-2"/>
    <property type="protein sequence ID" value="ENSP00000382576.3"/>
    <property type="gene ID" value="ENSG00000137812.21"/>
</dbReference>
<dbReference type="GeneID" id="57082"/>
<dbReference type="KEGG" id="hsa:57082"/>
<dbReference type="MANE-Select" id="ENST00000399668.7">
    <molecule id="Q8NG31-2"/>
    <property type="protein sequence ID" value="ENSP00000382576.3"/>
    <property type="RefSeq nucleotide sequence ID" value="NM_144508.5"/>
    <property type="RefSeq protein sequence ID" value="NP_653091.3"/>
</dbReference>
<dbReference type="UCSC" id="uc010bbs.2">
    <molecule id="Q8NG31-1"/>
    <property type="organism name" value="human"/>
</dbReference>
<dbReference type="AGR" id="HGNC:24054"/>
<dbReference type="CTD" id="57082"/>
<dbReference type="DisGeNET" id="57082"/>
<dbReference type="GeneCards" id="KNL1"/>
<dbReference type="HGNC" id="HGNC:24054">
    <property type="gene designation" value="KNL1"/>
</dbReference>
<dbReference type="HPA" id="ENSG00000137812">
    <property type="expression patterns" value="Group enriched (bone marrow, lymphoid tissue, testis)"/>
</dbReference>
<dbReference type="MalaCards" id="KNL1"/>
<dbReference type="MIM" id="604321">
    <property type="type" value="phenotype"/>
</dbReference>
<dbReference type="MIM" id="609173">
    <property type="type" value="gene"/>
</dbReference>
<dbReference type="neXtProt" id="NX_Q8NG31"/>
<dbReference type="OpenTargets" id="ENSG00000137812"/>
<dbReference type="Orphanet" id="2512">
    <property type="disease" value="Autosomal recessive primary microcephaly"/>
</dbReference>
<dbReference type="PharmGKB" id="PA142672201"/>
<dbReference type="VEuPathDB" id="HostDB:ENSG00000137812"/>
<dbReference type="eggNOG" id="ENOG502QW5H">
    <property type="taxonomic scope" value="Eukaryota"/>
</dbReference>
<dbReference type="GeneTree" id="ENSGT00410000025918"/>
<dbReference type="InParanoid" id="Q8NG31"/>
<dbReference type="OMA" id="EITKCHA"/>
<dbReference type="OrthoDB" id="6132334at2759"/>
<dbReference type="PAN-GO" id="Q8NG31">
    <property type="GO annotations" value="3 GO annotations based on evolutionary models"/>
</dbReference>
<dbReference type="PhylomeDB" id="Q8NG31"/>
<dbReference type="TreeFam" id="TF335517"/>
<dbReference type="PathwayCommons" id="Q8NG31"/>
<dbReference type="Reactome" id="R-HSA-141444">
    <property type="pathway name" value="Amplification of signal from unattached kinetochores via a MAD2 inhibitory signal"/>
</dbReference>
<dbReference type="Reactome" id="R-HSA-2467813">
    <property type="pathway name" value="Separation of Sister Chromatids"/>
</dbReference>
<dbReference type="Reactome" id="R-HSA-2500257">
    <property type="pathway name" value="Resolution of Sister Chromatid Cohesion"/>
</dbReference>
<dbReference type="Reactome" id="R-HSA-5663220">
    <property type="pathway name" value="RHO GTPases Activate Formins"/>
</dbReference>
<dbReference type="Reactome" id="R-HSA-606279">
    <property type="pathway name" value="Deposition of new CENPA-containing nucleosomes at the centromere"/>
</dbReference>
<dbReference type="Reactome" id="R-HSA-68877">
    <property type="pathway name" value="Mitotic Prometaphase"/>
</dbReference>
<dbReference type="Reactome" id="R-HSA-9648025">
    <property type="pathway name" value="EML4 and NUDC in mitotic spindle formation"/>
</dbReference>
<dbReference type="SignaLink" id="Q8NG31"/>
<dbReference type="SIGNOR" id="Q8NG31"/>
<dbReference type="BioGRID-ORCS" id="57082">
    <property type="hits" value="605 hits in 1168 CRISPR screens"/>
</dbReference>
<dbReference type="ChiTaRS" id="KNL1">
    <property type="organism name" value="human"/>
</dbReference>
<dbReference type="EvolutionaryTrace" id="Q8NG31"/>
<dbReference type="GeneWiki" id="CASC5"/>
<dbReference type="GenomeRNAi" id="57082"/>
<dbReference type="Pharos" id="Q8NG31">
    <property type="development level" value="Tbio"/>
</dbReference>
<dbReference type="PRO" id="PR:Q8NG31"/>
<dbReference type="Proteomes" id="UP000005640">
    <property type="component" value="Chromosome 15"/>
</dbReference>
<dbReference type="RNAct" id="Q8NG31">
    <property type="molecule type" value="protein"/>
</dbReference>
<dbReference type="Bgee" id="ENSG00000137812">
    <property type="expression patterns" value="Expressed in male germ line stem cell (sensu Vertebrata) in testis and 130 other cell types or tissues"/>
</dbReference>
<dbReference type="ExpressionAtlas" id="Q8NG31">
    <property type="expression patterns" value="baseline and differential"/>
</dbReference>
<dbReference type="GO" id="GO:0001669">
    <property type="term" value="C:acrosomal vesicle"/>
    <property type="evidence" value="ECO:0000314"/>
    <property type="project" value="UniProtKB"/>
</dbReference>
<dbReference type="GO" id="GO:0005829">
    <property type="term" value="C:cytosol"/>
    <property type="evidence" value="ECO:0000304"/>
    <property type="project" value="Reactome"/>
</dbReference>
<dbReference type="GO" id="GO:0000776">
    <property type="term" value="C:kinetochore"/>
    <property type="evidence" value="ECO:0000314"/>
    <property type="project" value="UniProtKB"/>
</dbReference>
<dbReference type="GO" id="GO:0180019">
    <property type="term" value="C:Knl1/Spc105 complex"/>
    <property type="evidence" value="ECO:0000314"/>
    <property type="project" value="UniProtKB"/>
</dbReference>
<dbReference type="GO" id="GO:0016604">
    <property type="term" value="C:nuclear body"/>
    <property type="evidence" value="ECO:0000314"/>
    <property type="project" value="HPA"/>
</dbReference>
<dbReference type="GO" id="GO:0005654">
    <property type="term" value="C:nucleoplasm"/>
    <property type="evidence" value="ECO:0000314"/>
    <property type="project" value="HPA"/>
</dbReference>
<dbReference type="GO" id="GO:0005634">
    <property type="term" value="C:nucleus"/>
    <property type="evidence" value="ECO:0000314"/>
    <property type="project" value="UniProtKB"/>
</dbReference>
<dbReference type="GO" id="GO:0000940">
    <property type="term" value="C:outer kinetochore"/>
    <property type="evidence" value="ECO:0000314"/>
    <property type="project" value="UniProtKB"/>
</dbReference>
<dbReference type="GO" id="GO:0008017">
    <property type="term" value="F:microtubule binding"/>
    <property type="evidence" value="ECO:0000314"/>
    <property type="project" value="UniProtKB"/>
</dbReference>
<dbReference type="GO" id="GO:0001675">
    <property type="term" value="P:acrosome assembly"/>
    <property type="evidence" value="ECO:0000303"/>
    <property type="project" value="UniProtKB"/>
</dbReference>
<dbReference type="GO" id="GO:0008608">
    <property type="term" value="P:attachment of spindle microtubules to kinetochore"/>
    <property type="evidence" value="ECO:0000314"/>
    <property type="project" value="UniProtKB"/>
</dbReference>
<dbReference type="GO" id="GO:0051301">
    <property type="term" value="P:cell division"/>
    <property type="evidence" value="ECO:0007669"/>
    <property type="project" value="UniProtKB-KW"/>
</dbReference>
<dbReference type="GO" id="GO:0031619">
    <property type="term" value="P:homologous chromosome orientation in meiotic metaphase I"/>
    <property type="evidence" value="ECO:0000250"/>
    <property type="project" value="UniProtKB"/>
</dbReference>
<dbReference type="GO" id="GO:0000070">
    <property type="term" value="P:mitotic sister chromatid segregation"/>
    <property type="evidence" value="ECO:0000315"/>
    <property type="project" value="UniProtKB"/>
</dbReference>
<dbReference type="GO" id="GO:1905326">
    <property type="term" value="P:positive regulation of meiosis I spindle assembly checkpoint"/>
    <property type="evidence" value="ECO:0000250"/>
    <property type="project" value="UniProtKB"/>
</dbReference>
<dbReference type="GO" id="GO:0034501">
    <property type="term" value="P:protein localization to kinetochore"/>
    <property type="evidence" value="ECO:0000314"/>
    <property type="project" value="MGI"/>
</dbReference>
<dbReference type="GO" id="GO:0090266">
    <property type="term" value="P:regulation of mitotic cell cycle spindle assembly checkpoint"/>
    <property type="evidence" value="ECO:0000315"/>
    <property type="project" value="UniProtKB"/>
</dbReference>
<dbReference type="CDD" id="cd22892">
    <property type="entry name" value="DRWD-C_Knl1"/>
    <property type="match status" value="1"/>
</dbReference>
<dbReference type="CDD" id="cd22817">
    <property type="entry name" value="DRWD-N_Knl1"/>
    <property type="match status" value="1"/>
</dbReference>
<dbReference type="CDD" id="cd21853">
    <property type="entry name" value="KNL1_NTD"/>
    <property type="match status" value="1"/>
</dbReference>
<dbReference type="DisProt" id="DP01269"/>
<dbReference type="IDEAL" id="IID00417"/>
<dbReference type="InterPro" id="IPR037388">
    <property type="entry name" value="Blinkin"/>
</dbReference>
<dbReference type="InterPro" id="IPR043651">
    <property type="entry name" value="KNL1_MELT_rpt"/>
</dbReference>
<dbReference type="InterPro" id="IPR040850">
    <property type="entry name" value="Knl1_RWD_C"/>
</dbReference>
<dbReference type="PANTHER" id="PTHR16520">
    <property type="entry name" value="KINETOCHORE SCAFFOLD 1"/>
    <property type="match status" value="1"/>
</dbReference>
<dbReference type="PANTHER" id="PTHR16520:SF3">
    <property type="entry name" value="KINETOCHORE SCAFFOLD 1"/>
    <property type="match status" value="1"/>
</dbReference>
<dbReference type="Pfam" id="PF18210">
    <property type="entry name" value="Knl1_RWD_C"/>
    <property type="match status" value="1"/>
</dbReference>
<dbReference type="Pfam" id="PF19221">
    <property type="entry name" value="MELT"/>
    <property type="match status" value="12"/>
</dbReference>
<proteinExistence type="evidence at protein level"/>